<organism>
    <name type="scientific">Selaginella moellendorffii</name>
    <name type="common">Spikemoss</name>
    <dbReference type="NCBI Taxonomy" id="88036"/>
    <lineage>
        <taxon>Eukaryota</taxon>
        <taxon>Viridiplantae</taxon>
        <taxon>Streptophyta</taxon>
        <taxon>Embryophyta</taxon>
        <taxon>Tracheophyta</taxon>
        <taxon>Lycopodiopsida</taxon>
        <taxon>Selaginellales</taxon>
        <taxon>Selaginellaceae</taxon>
        <taxon>Selaginella</taxon>
    </lineage>
</organism>
<keyword id="KW-1003">Cell membrane</keyword>
<keyword id="KW-0325">Glycoprotein</keyword>
<keyword id="KW-0472">Membrane</keyword>
<keyword id="KW-1185">Reference proteome</keyword>
<keyword id="KW-0812">Transmembrane</keyword>
<keyword id="KW-1133">Transmembrane helix</keyword>
<protein>
    <recommendedName>
        <fullName>CASP-like protein 2U2</fullName>
        <shortName>SmCASPL2U2</shortName>
    </recommendedName>
</protein>
<name>CSPL8_SELML</name>
<dbReference type="EMBL" id="GL377571">
    <property type="protein sequence ID" value="EFJ33221.1"/>
    <property type="status" value="ALT_SEQ"/>
    <property type="molecule type" value="Genomic_DNA"/>
</dbReference>
<dbReference type="EMBL" id="FE488441">
    <property type="status" value="NOT_ANNOTATED_CDS"/>
    <property type="molecule type" value="mRNA"/>
</dbReference>
<dbReference type="HOGENOM" id="CLU_032438_0_0_1"/>
<dbReference type="InParanoid" id="P0DH65"/>
<dbReference type="OrthoDB" id="749363at2759"/>
<dbReference type="Proteomes" id="UP000001514">
    <property type="component" value="Unassembled WGS sequence"/>
</dbReference>
<dbReference type="GO" id="GO:0005886">
    <property type="term" value="C:plasma membrane"/>
    <property type="evidence" value="ECO:0007669"/>
    <property type="project" value="UniProtKB-SubCell"/>
</dbReference>
<dbReference type="InterPro" id="IPR006459">
    <property type="entry name" value="CASP/CASPL"/>
</dbReference>
<dbReference type="InterPro" id="IPR006702">
    <property type="entry name" value="CASP_dom"/>
</dbReference>
<dbReference type="NCBIfam" id="TIGR01569">
    <property type="entry name" value="A_tha_TIGR01569"/>
    <property type="match status" value="1"/>
</dbReference>
<dbReference type="PANTHER" id="PTHR33573:SF30">
    <property type="entry name" value="CASP-LIKE PROTEIN 2C1-RELATED"/>
    <property type="match status" value="1"/>
</dbReference>
<dbReference type="PANTHER" id="PTHR33573">
    <property type="entry name" value="CASP-LIKE PROTEIN 4A4"/>
    <property type="match status" value="1"/>
</dbReference>
<dbReference type="Pfam" id="PF04535">
    <property type="entry name" value="CASP_dom"/>
    <property type="match status" value="1"/>
</dbReference>
<proteinExistence type="evidence at transcript level"/>
<evidence type="ECO:0000250" key="1"/>
<evidence type="ECO:0000255" key="2"/>
<evidence type="ECO:0000305" key="3"/>
<gene>
    <name type="ORF">SELMODRAFT_439258</name>
</gene>
<comment type="subunit">
    <text evidence="1">Homodimer and heterodimers.</text>
</comment>
<comment type="subcellular location">
    <subcellularLocation>
        <location evidence="1">Cell membrane</location>
        <topology evidence="1">Multi-pass membrane protein</topology>
    </subcellularLocation>
</comment>
<comment type="similarity">
    <text evidence="3">Belongs to the Casparian strip membrane proteins (CASP) family.</text>
</comment>
<comment type="sequence caution" evidence="3">
    <conflict type="erroneous gene model prediction">
        <sequence resource="EMBL-CDS" id="EFJ33221"/>
    </conflict>
    <text>The predicted gene has been split into 2 genes.</text>
</comment>
<reference key="1">
    <citation type="journal article" date="2011" name="Science">
        <title>The Selaginella genome identifies genetic changes associated with the evolution of vascular plants.</title>
        <authorList>
            <person name="Banks J.A."/>
            <person name="Nishiyama T."/>
            <person name="Hasebe M."/>
            <person name="Bowman J.L."/>
            <person name="Gribskov M."/>
            <person name="dePamphilis C."/>
            <person name="Albert V.A."/>
            <person name="Aono N."/>
            <person name="Aoyama T."/>
            <person name="Ambrose B.A."/>
            <person name="Ashton N.W."/>
            <person name="Axtell M.J."/>
            <person name="Barker E."/>
            <person name="Barker M.S."/>
            <person name="Bennetzen J.L."/>
            <person name="Bonawitz N.D."/>
            <person name="Chapple C."/>
            <person name="Cheng C."/>
            <person name="Correa L.G."/>
            <person name="Dacre M."/>
            <person name="DeBarry J."/>
            <person name="Dreyer I."/>
            <person name="Elias M."/>
            <person name="Engstrom E.M."/>
            <person name="Estelle M."/>
            <person name="Feng L."/>
            <person name="Finet C."/>
            <person name="Floyd S.K."/>
            <person name="Frommer W.B."/>
            <person name="Fujita T."/>
            <person name="Gramzow L."/>
            <person name="Gutensohn M."/>
            <person name="Harholt J."/>
            <person name="Hattori M."/>
            <person name="Heyl A."/>
            <person name="Hirai T."/>
            <person name="Hiwatashi Y."/>
            <person name="Ishikawa M."/>
            <person name="Iwata M."/>
            <person name="Karol K.G."/>
            <person name="Koehler B."/>
            <person name="Kolukisaoglu U."/>
            <person name="Kubo M."/>
            <person name="Kurata T."/>
            <person name="Lalonde S."/>
            <person name="Li K."/>
            <person name="Li Y."/>
            <person name="Litt A."/>
            <person name="Lyons E."/>
            <person name="Manning G."/>
            <person name="Maruyama T."/>
            <person name="Michael T.P."/>
            <person name="Mikami K."/>
            <person name="Miyazaki S."/>
            <person name="Morinaga S."/>
            <person name="Murata T."/>
            <person name="Mueller-Roeber B."/>
            <person name="Nelson D.R."/>
            <person name="Obara M."/>
            <person name="Oguri Y."/>
            <person name="Olmstead R.G."/>
            <person name="Onodera N."/>
            <person name="Petersen B.L."/>
            <person name="Pils B."/>
            <person name="Prigge M."/>
            <person name="Rensing S.A."/>
            <person name="Riano-Pachon D.M."/>
            <person name="Roberts A.W."/>
            <person name="Sato Y."/>
            <person name="Scheller H.V."/>
            <person name="Schulz B."/>
            <person name="Schulz C."/>
            <person name="Shakirov E.V."/>
            <person name="Shibagaki N."/>
            <person name="Shinohara N."/>
            <person name="Shippen D.E."/>
            <person name="Soerensen I."/>
            <person name="Sotooka R."/>
            <person name="Sugimoto N."/>
            <person name="Sugita M."/>
            <person name="Sumikawa N."/>
            <person name="Tanurdzic M."/>
            <person name="Theissen G."/>
            <person name="Ulvskov P."/>
            <person name="Wakazuki S."/>
            <person name="Weng J.K."/>
            <person name="Willats W.W."/>
            <person name="Wipf D."/>
            <person name="Wolf P.G."/>
            <person name="Yang L."/>
            <person name="Zimmer A.D."/>
            <person name="Zhu Q."/>
            <person name="Mitros T."/>
            <person name="Hellsten U."/>
            <person name="Loque D."/>
            <person name="Otillar R."/>
            <person name="Salamov A."/>
            <person name="Schmutz J."/>
            <person name="Shapiro H."/>
            <person name="Lindquist E."/>
            <person name="Lucas S."/>
            <person name="Rokhsar D."/>
            <person name="Grigoriev I.V."/>
        </authorList>
    </citation>
    <scope>NUCLEOTIDE SEQUENCE [LARGE SCALE GENOMIC DNA]</scope>
</reference>
<reference key="2">
    <citation type="submission" date="2008-03" db="EMBL/GenBank/DDBJ databases">
        <title>DOE Joint Genome Institute Selaginella moellendorffii EST project.</title>
        <authorList>
            <person name="Richardson P."/>
            <person name="Lucas S."/>
            <person name="Rokhsar D."/>
            <person name="Wang M."/>
            <person name="Lindquist E.A."/>
        </authorList>
    </citation>
    <scope>NUCLEOTIDE SEQUENCE [LARGE SCALE MRNA]</scope>
</reference>
<reference key="3">
    <citation type="journal article" date="2014" name="Plant Physiol.">
        <title>Functional and evolutionary analysis of the CASPARIAN STRIP MEMBRANE DOMAIN PROTEIN family.</title>
        <authorList>
            <person name="Roppolo D."/>
            <person name="Boeckmann B."/>
            <person name="Pfister A."/>
            <person name="Boutet E."/>
            <person name="Rubio M.C."/>
            <person name="Denervaud-Tendon V."/>
            <person name="Vermeer J.E."/>
            <person name="Gheyselinck J."/>
            <person name="Xenarios I."/>
            <person name="Geldner N."/>
        </authorList>
    </citation>
    <scope>GENE FAMILY</scope>
    <scope>NOMENCLATURE</scope>
</reference>
<accession>P0DH65</accession>
<accession>D8R355</accession>
<sequence length="204" mass="22023">MGVLGGDAHVPIGSQVSPGSVVVTNNESFGHRKLLKGVDFLVRIKAFAFCLAVIVLLKNNVQTTVIAPGIVLQAKYNNTKAPVSLLVLASICCGYAFLQAVVSLLSFIRDKRVLNNTVLAWLTFLLDQVLTYLLLGSAAATAEAAYIAKRGEDKVQWKAVCGPFKRFCDHFAATVFLSFIAVIAFAVSAAISAYYLFRKSKGFK</sequence>
<feature type="chain" id="PRO_0000412055" description="CASP-like protein 2U2">
    <location>
        <begin position="1"/>
        <end position="204"/>
    </location>
</feature>
<feature type="topological domain" description="Cytoplasmic" evidence="2">
    <location>
        <begin position="1"/>
        <end position="36"/>
    </location>
</feature>
<feature type="transmembrane region" description="Helical" evidence="2">
    <location>
        <begin position="37"/>
        <end position="57"/>
    </location>
</feature>
<feature type="topological domain" description="Extracellular" evidence="2">
    <location>
        <begin position="58"/>
        <end position="84"/>
    </location>
</feature>
<feature type="transmembrane region" description="Helical" evidence="2">
    <location>
        <begin position="85"/>
        <end position="105"/>
    </location>
</feature>
<feature type="topological domain" description="Cytoplasmic" evidence="2">
    <location>
        <begin position="106"/>
        <end position="117"/>
    </location>
</feature>
<feature type="transmembrane region" description="Helical" evidence="2">
    <location>
        <begin position="118"/>
        <end position="138"/>
    </location>
</feature>
<feature type="topological domain" description="Extracellular" evidence="2">
    <location>
        <begin position="139"/>
        <end position="170"/>
    </location>
</feature>
<feature type="transmembrane region" description="Helical" evidence="2">
    <location>
        <begin position="171"/>
        <end position="191"/>
    </location>
</feature>
<feature type="topological domain" description="Cytoplasmic" evidence="2">
    <location>
        <begin position="192"/>
        <end position="204"/>
    </location>
</feature>
<feature type="glycosylation site" description="N-linked (GlcNAc...) asparagine" evidence="2">
    <location>
        <position position="77"/>
    </location>
</feature>